<gene>
    <name evidence="1" type="primary">rpsG</name>
    <name type="ordered locus">LACR_2596</name>
</gene>
<keyword id="KW-0687">Ribonucleoprotein</keyword>
<keyword id="KW-0689">Ribosomal protein</keyword>
<keyword id="KW-0694">RNA-binding</keyword>
<keyword id="KW-0699">rRNA-binding</keyword>
<keyword id="KW-0820">tRNA-binding</keyword>
<name>RS7_LACLS</name>
<accession>Q02VK9</accession>
<sequence>MRKNRAPKREVLADPMYNSIVVTRLINRVMLDGKRGVAAQIVYGAFKQIEEATGNNPLEVFETAMENIMPVLEVRARRVGGSNYQVPVEVRPERRTTLGLRWLVTIARNRGEHTMQDRLAKEILDAANNTGAAVKKREDTHKMAEANRAFAHFRW</sequence>
<evidence type="ECO:0000255" key="1">
    <source>
        <dbReference type="HAMAP-Rule" id="MF_00480"/>
    </source>
</evidence>
<evidence type="ECO:0000305" key="2"/>
<comment type="function">
    <text evidence="1">One of the primary rRNA binding proteins, it binds directly to 16S rRNA where it nucleates assembly of the head domain of the 30S subunit. Is located at the subunit interface close to the decoding center, probably blocks exit of the E-site tRNA.</text>
</comment>
<comment type="subunit">
    <text evidence="1">Part of the 30S ribosomal subunit. Contacts proteins S9 and S11.</text>
</comment>
<comment type="similarity">
    <text evidence="1">Belongs to the universal ribosomal protein uS7 family.</text>
</comment>
<protein>
    <recommendedName>
        <fullName evidence="1">Small ribosomal subunit protein uS7</fullName>
    </recommendedName>
    <alternativeName>
        <fullName evidence="2">30S ribosomal protein S7</fullName>
    </alternativeName>
</protein>
<dbReference type="EMBL" id="CP000425">
    <property type="protein sequence ID" value="ABJ74013.1"/>
    <property type="molecule type" value="Genomic_DNA"/>
</dbReference>
<dbReference type="RefSeq" id="WP_003129876.1">
    <property type="nucleotide sequence ID" value="NC_008527.1"/>
</dbReference>
<dbReference type="SMR" id="Q02VK9"/>
<dbReference type="GeneID" id="89634663"/>
<dbReference type="KEGG" id="llc:LACR_2596"/>
<dbReference type="HOGENOM" id="CLU_072226_1_1_9"/>
<dbReference type="Proteomes" id="UP000000240">
    <property type="component" value="Chromosome"/>
</dbReference>
<dbReference type="GO" id="GO:0015935">
    <property type="term" value="C:small ribosomal subunit"/>
    <property type="evidence" value="ECO:0007669"/>
    <property type="project" value="InterPro"/>
</dbReference>
<dbReference type="GO" id="GO:0019843">
    <property type="term" value="F:rRNA binding"/>
    <property type="evidence" value="ECO:0007669"/>
    <property type="project" value="UniProtKB-UniRule"/>
</dbReference>
<dbReference type="GO" id="GO:0003735">
    <property type="term" value="F:structural constituent of ribosome"/>
    <property type="evidence" value="ECO:0007669"/>
    <property type="project" value="InterPro"/>
</dbReference>
<dbReference type="GO" id="GO:0000049">
    <property type="term" value="F:tRNA binding"/>
    <property type="evidence" value="ECO:0007669"/>
    <property type="project" value="UniProtKB-UniRule"/>
</dbReference>
<dbReference type="GO" id="GO:0006412">
    <property type="term" value="P:translation"/>
    <property type="evidence" value="ECO:0007669"/>
    <property type="project" value="UniProtKB-UniRule"/>
</dbReference>
<dbReference type="CDD" id="cd14869">
    <property type="entry name" value="uS7_Bacteria"/>
    <property type="match status" value="1"/>
</dbReference>
<dbReference type="FunFam" id="1.10.455.10:FF:000001">
    <property type="entry name" value="30S ribosomal protein S7"/>
    <property type="match status" value="1"/>
</dbReference>
<dbReference type="Gene3D" id="1.10.455.10">
    <property type="entry name" value="Ribosomal protein S7 domain"/>
    <property type="match status" value="1"/>
</dbReference>
<dbReference type="HAMAP" id="MF_00480_B">
    <property type="entry name" value="Ribosomal_uS7_B"/>
    <property type="match status" value="1"/>
</dbReference>
<dbReference type="InterPro" id="IPR000235">
    <property type="entry name" value="Ribosomal_uS7"/>
</dbReference>
<dbReference type="InterPro" id="IPR005717">
    <property type="entry name" value="Ribosomal_uS7_bac/org-type"/>
</dbReference>
<dbReference type="InterPro" id="IPR020606">
    <property type="entry name" value="Ribosomal_uS7_CS"/>
</dbReference>
<dbReference type="InterPro" id="IPR023798">
    <property type="entry name" value="Ribosomal_uS7_dom"/>
</dbReference>
<dbReference type="InterPro" id="IPR036823">
    <property type="entry name" value="Ribosomal_uS7_dom_sf"/>
</dbReference>
<dbReference type="NCBIfam" id="TIGR01029">
    <property type="entry name" value="rpsG_bact"/>
    <property type="match status" value="1"/>
</dbReference>
<dbReference type="PANTHER" id="PTHR11205">
    <property type="entry name" value="RIBOSOMAL PROTEIN S7"/>
    <property type="match status" value="1"/>
</dbReference>
<dbReference type="Pfam" id="PF00177">
    <property type="entry name" value="Ribosomal_S7"/>
    <property type="match status" value="1"/>
</dbReference>
<dbReference type="PIRSF" id="PIRSF002122">
    <property type="entry name" value="RPS7p_RPS7a_RPS5e_RPS7o"/>
    <property type="match status" value="1"/>
</dbReference>
<dbReference type="SUPFAM" id="SSF47973">
    <property type="entry name" value="Ribosomal protein S7"/>
    <property type="match status" value="1"/>
</dbReference>
<dbReference type="PROSITE" id="PS00052">
    <property type="entry name" value="RIBOSOMAL_S7"/>
    <property type="match status" value="1"/>
</dbReference>
<organism>
    <name type="scientific">Lactococcus lactis subsp. cremoris (strain SK11)</name>
    <dbReference type="NCBI Taxonomy" id="272622"/>
    <lineage>
        <taxon>Bacteria</taxon>
        <taxon>Bacillati</taxon>
        <taxon>Bacillota</taxon>
        <taxon>Bacilli</taxon>
        <taxon>Lactobacillales</taxon>
        <taxon>Streptococcaceae</taxon>
        <taxon>Lactococcus</taxon>
        <taxon>Lactococcus cremoris subsp. cremoris</taxon>
    </lineage>
</organism>
<proteinExistence type="inferred from homology"/>
<feature type="chain" id="PRO_0000344298" description="Small ribosomal subunit protein uS7">
    <location>
        <begin position="1"/>
        <end position="155"/>
    </location>
</feature>
<reference key="1">
    <citation type="journal article" date="2006" name="Proc. Natl. Acad. Sci. U.S.A.">
        <title>Comparative genomics of the lactic acid bacteria.</title>
        <authorList>
            <person name="Makarova K.S."/>
            <person name="Slesarev A."/>
            <person name="Wolf Y.I."/>
            <person name="Sorokin A."/>
            <person name="Mirkin B."/>
            <person name="Koonin E.V."/>
            <person name="Pavlov A."/>
            <person name="Pavlova N."/>
            <person name="Karamychev V."/>
            <person name="Polouchine N."/>
            <person name="Shakhova V."/>
            <person name="Grigoriev I."/>
            <person name="Lou Y."/>
            <person name="Rohksar D."/>
            <person name="Lucas S."/>
            <person name="Huang K."/>
            <person name="Goodstein D.M."/>
            <person name="Hawkins T."/>
            <person name="Plengvidhya V."/>
            <person name="Welker D."/>
            <person name="Hughes J."/>
            <person name="Goh Y."/>
            <person name="Benson A."/>
            <person name="Baldwin K."/>
            <person name="Lee J.-H."/>
            <person name="Diaz-Muniz I."/>
            <person name="Dosti B."/>
            <person name="Smeianov V."/>
            <person name="Wechter W."/>
            <person name="Barabote R."/>
            <person name="Lorca G."/>
            <person name="Altermann E."/>
            <person name="Barrangou R."/>
            <person name="Ganesan B."/>
            <person name="Xie Y."/>
            <person name="Rawsthorne H."/>
            <person name="Tamir D."/>
            <person name="Parker C."/>
            <person name="Breidt F."/>
            <person name="Broadbent J.R."/>
            <person name="Hutkins R."/>
            <person name="O'Sullivan D."/>
            <person name="Steele J."/>
            <person name="Unlu G."/>
            <person name="Saier M.H. Jr."/>
            <person name="Klaenhammer T."/>
            <person name="Richardson P."/>
            <person name="Kozyavkin S."/>
            <person name="Weimer B.C."/>
            <person name="Mills D.A."/>
        </authorList>
    </citation>
    <scope>NUCLEOTIDE SEQUENCE [LARGE SCALE GENOMIC DNA]</scope>
    <source>
        <strain>SK11</strain>
    </source>
</reference>